<name>PURNU_CORGL</name>
<protein>
    <recommendedName>
        <fullName>Purine nucleoside phosphorylase Cgl2154/cg2365</fullName>
        <ecNumber evidence="2">2.4.2.1</ecNumber>
    </recommendedName>
    <alternativeName>
        <fullName>Adenosine deaminase Cgl2154/cg2365</fullName>
        <ecNumber evidence="2">3.5.4.4</ecNumber>
    </alternativeName>
    <alternativeName>
        <fullName>S-methyl-5'-thioadenosine phosphorylase Cgl2154/cg2365</fullName>
        <ecNumber evidence="2">2.4.2.28</ecNumber>
    </alternativeName>
</protein>
<sequence>MDSLDPRNRPVRKVFTTRAGGVSQSPYASFNLGDHVGDDPQAVASNRNRLADIIGLSPDKVVYMEQIHSNTVTVIDEAPADGQAVEATDALVTTQRGLALAVLVADCVPVLLSDTDAGVIAAVHAGRMGARNGIVAKTIAKMEELGAKPSRIHALMGAAASGANYEVPEAMARDVEAKLPGSIARTTKGTTGLDIRAGLLRQMLSLGVQMIDSDPRCTIEDEDLFSYRREGTTGRQAGVVWLPKEA</sequence>
<accession>P94338</accession>
<accession>O24747</accession>
<feature type="chain" id="PRO_0000163161" description="Purine nucleoside phosphorylase Cgl2154/cg2365">
    <location>
        <begin position="1"/>
        <end position="246"/>
    </location>
</feature>
<feature type="binding site" evidence="2">
    <location>
        <position position="68"/>
    </location>
    <ligand>
        <name>Zn(2+)</name>
        <dbReference type="ChEBI" id="CHEBI:29105"/>
        <note>catalytic</note>
    </ligand>
</feature>
<feature type="binding site" evidence="2">
    <location>
        <position position="107"/>
    </location>
    <ligand>
        <name>Zn(2+)</name>
        <dbReference type="ChEBI" id="CHEBI:29105"/>
        <note>catalytic</note>
    </ligand>
</feature>
<feature type="binding site" evidence="2">
    <location>
        <position position="124"/>
    </location>
    <ligand>
        <name>Zn(2+)</name>
        <dbReference type="ChEBI" id="CHEBI:29105"/>
        <note>catalytic</note>
    </ligand>
</feature>
<feature type="sequence conflict" description="In Ref. 1; BAA21688." evidence="4" ref="1">
    <original>S</original>
    <variation>T</variation>
    <location>
        <position position="29"/>
    </location>
</feature>
<feature type="sequence conflict" description="In Ref. 1; BAA21688." evidence="4" ref="1">
    <original>DDPQ</original>
    <variation>YYPK</variation>
    <location>
        <begin position="38"/>
        <end position="41"/>
    </location>
</feature>
<feature type="sequence conflict" description="In Ref. 2; CAA70159." evidence="4" ref="2">
    <original>D</original>
    <variation>N</variation>
    <location>
        <position position="52"/>
    </location>
</feature>
<feature type="sequence conflict" description="In Ref. 2; CAA70159." evidence="4" ref="2">
    <original>V</original>
    <variation>I</variation>
    <location>
        <position position="72"/>
    </location>
</feature>
<feature type="sequence conflict" description="In Ref. 1; BAA21688." evidence="4" ref="1">
    <original>N</original>
    <variation>K</variation>
    <location>
        <position position="164"/>
    </location>
</feature>
<feature type="sequence conflict" description="In Ref. 1; BAA21688." evidence="4" ref="1">
    <original>I</original>
    <variation>L</variation>
    <location>
        <position position="183"/>
    </location>
</feature>
<dbReference type="EC" id="2.4.2.1" evidence="2"/>
<dbReference type="EC" id="3.5.4.4" evidence="2"/>
<dbReference type="EC" id="2.4.2.28" evidence="2"/>
<dbReference type="EMBL" id="AB003132">
    <property type="protein sequence ID" value="BAA21688.1"/>
    <property type="molecule type" value="Genomic_DNA"/>
</dbReference>
<dbReference type="EMBL" id="Y08964">
    <property type="protein sequence ID" value="CAA70159.1"/>
    <property type="molecule type" value="Genomic_DNA"/>
</dbReference>
<dbReference type="EMBL" id="BA000036">
    <property type="protein sequence ID" value="BAB99547.1"/>
    <property type="molecule type" value="Genomic_DNA"/>
</dbReference>
<dbReference type="EMBL" id="BX927154">
    <property type="protein sequence ID" value="CAF20494.1"/>
    <property type="molecule type" value="Genomic_DNA"/>
</dbReference>
<dbReference type="RefSeq" id="NP_601356.1">
    <property type="nucleotide sequence ID" value="NC_003450.3"/>
</dbReference>
<dbReference type="SMR" id="P94338"/>
<dbReference type="STRING" id="196627.cg2365"/>
<dbReference type="KEGG" id="cgb:cg2365"/>
<dbReference type="KEGG" id="cgl:Cgl2154"/>
<dbReference type="PATRIC" id="fig|196627.13.peg.2092"/>
<dbReference type="eggNOG" id="COG1496">
    <property type="taxonomic scope" value="Bacteria"/>
</dbReference>
<dbReference type="HOGENOM" id="CLU_065784_3_1_11"/>
<dbReference type="OrthoDB" id="4279at2"/>
<dbReference type="BioCyc" id="CORYNE:G18NG-11746-MONOMER"/>
<dbReference type="Proteomes" id="UP000000582">
    <property type="component" value="Chromosome"/>
</dbReference>
<dbReference type="Proteomes" id="UP000001009">
    <property type="component" value="Chromosome"/>
</dbReference>
<dbReference type="GO" id="GO:0004000">
    <property type="term" value="F:adenosine deaminase activity"/>
    <property type="evidence" value="ECO:0007669"/>
    <property type="project" value="RHEA"/>
</dbReference>
<dbReference type="GO" id="GO:0005507">
    <property type="term" value="F:copper ion binding"/>
    <property type="evidence" value="ECO:0007669"/>
    <property type="project" value="TreeGrafter"/>
</dbReference>
<dbReference type="GO" id="GO:0016491">
    <property type="term" value="F:oxidoreductase activity"/>
    <property type="evidence" value="ECO:0007669"/>
    <property type="project" value="UniProtKB-KW"/>
</dbReference>
<dbReference type="GO" id="GO:0017061">
    <property type="term" value="F:S-methyl-5-thioadenosine phosphorylase activity"/>
    <property type="evidence" value="ECO:0007669"/>
    <property type="project" value="UniProtKB-EC"/>
</dbReference>
<dbReference type="CDD" id="cd16833">
    <property type="entry name" value="YfiH"/>
    <property type="match status" value="1"/>
</dbReference>
<dbReference type="FunFam" id="3.60.140.10:FF:000003">
    <property type="entry name" value="Polyphenol oxidase"/>
    <property type="match status" value="1"/>
</dbReference>
<dbReference type="Gene3D" id="3.60.140.10">
    <property type="entry name" value="CNF1/YfiH-like putative cysteine hydrolases"/>
    <property type="match status" value="1"/>
</dbReference>
<dbReference type="InterPro" id="IPR003730">
    <property type="entry name" value="Cu_polyphenol_OxRdtase"/>
</dbReference>
<dbReference type="InterPro" id="IPR038371">
    <property type="entry name" value="Cu_polyphenol_OxRdtase_sf"/>
</dbReference>
<dbReference type="InterPro" id="IPR011324">
    <property type="entry name" value="Cytotoxic_necrot_fac-like_cat"/>
</dbReference>
<dbReference type="NCBIfam" id="TIGR00726">
    <property type="entry name" value="peptidoglycan editing factor PgeF"/>
    <property type="match status" value="1"/>
</dbReference>
<dbReference type="PANTHER" id="PTHR30616:SF2">
    <property type="entry name" value="PURINE NUCLEOSIDE PHOSPHORYLASE LACC1"/>
    <property type="match status" value="1"/>
</dbReference>
<dbReference type="PANTHER" id="PTHR30616">
    <property type="entry name" value="UNCHARACTERIZED PROTEIN YFIH"/>
    <property type="match status" value="1"/>
</dbReference>
<dbReference type="Pfam" id="PF02578">
    <property type="entry name" value="Cu-oxidase_4"/>
    <property type="match status" value="1"/>
</dbReference>
<dbReference type="SUPFAM" id="SSF64438">
    <property type="entry name" value="CNF1/YfiH-like putative cysteine hydrolases"/>
    <property type="match status" value="1"/>
</dbReference>
<reference key="1">
    <citation type="journal article" date="1997" name="Biochem. Biophys. Res. Commun.">
        <title>Cloning, sequencing, and characterization of the ftsZ gene from coryneform bacteria.</title>
        <authorList>
            <person name="Kobayashi M."/>
            <person name="Asai Y."/>
            <person name="Hatakeyama K."/>
            <person name="Kijima N."/>
            <person name="Wachi M."/>
            <person name="Nagai K."/>
            <person name="Yukawa H."/>
        </authorList>
    </citation>
    <scope>NUCLEOTIDE SEQUENCE [GENOMIC DNA]</scope>
</reference>
<reference key="2">
    <citation type="journal article" date="1998" name="Mol. Gen. Genet.">
        <title>Identification, characterization, and chromosomal organization of the ftsZ gene from Brevibacterium lactofermentum.</title>
        <authorList>
            <person name="Honrubia M.P."/>
            <person name="Fernandez F.J."/>
            <person name="Gil J.A."/>
        </authorList>
    </citation>
    <scope>NUCLEOTIDE SEQUENCE [GENOMIC DNA]</scope>
    <source>
        <strain>ATCC 13869 / DSMZ 1412 / NCIMB 9567</strain>
    </source>
</reference>
<reference key="3">
    <citation type="journal article" date="2003" name="Appl. Microbiol. Biotechnol.">
        <title>The Corynebacterium glutamicum genome: features and impacts on biotechnological processes.</title>
        <authorList>
            <person name="Ikeda M."/>
            <person name="Nakagawa S."/>
        </authorList>
    </citation>
    <scope>NUCLEOTIDE SEQUENCE [LARGE SCALE GENOMIC DNA]</scope>
    <source>
        <strain>ATCC 13032 / DSM 20300 / JCM 1318 / BCRC 11384 / CCUG 27702 / LMG 3730 / NBRC 12168 / NCIMB 10025 / NRRL B-2784 / 534</strain>
    </source>
</reference>
<reference key="4">
    <citation type="journal article" date="2003" name="J. Biotechnol.">
        <title>The complete Corynebacterium glutamicum ATCC 13032 genome sequence and its impact on the production of L-aspartate-derived amino acids and vitamins.</title>
        <authorList>
            <person name="Kalinowski J."/>
            <person name="Bathe B."/>
            <person name="Bartels D."/>
            <person name="Bischoff N."/>
            <person name="Bott M."/>
            <person name="Burkovski A."/>
            <person name="Dusch N."/>
            <person name="Eggeling L."/>
            <person name="Eikmanns B.J."/>
            <person name="Gaigalat L."/>
            <person name="Goesmann A."/>
            <person name="Hartmann M."/>
            <person name="Huthmacher K."/>
            <person name="Kraemer R."/>
            <person name="Linke B."/>
            <person name="McHardy A.C."/>
            <person name="Meyer F."/>
            <person name="Moeckel B."/>
            <person name="Pfefferle W."/>
            <person name="Puehler A."/>
            <person name="Rey D.A."/>
            <person name="Rueckert C."/>
            <person name="Rupp O."/>
            <person name="Sahm H."/>
            <person name="Wendisch V.F."/>
            <person name="Wiegraebe I."/>
            <person name="Tauch A."/>
        </authorList>
    </citation>
    <scope>NUCLEOTIDE SEQUENCE [LARGE SCALE GENOMIC DNA]</scope>
    <source>
        <strain>ATCC 13032 / DSM 20300 / JCM 1318 / BCRC 11384 / CCUG 27702 / LMG 3730 / NBRC 12168 / NCIMB 10025 / NRRL B-2784 / 534</strain>
    </source>
</reference>
<gene>
    <name type="ordered locus">Cgl2154</name>
    <name type="ordered locus">cg2365</name>
</gene>
<evidence type="ECO:0000250" key="1">
    <source>
        <dbReference type="UniProtKB" id="P33644"/>
    </source>
</evidence>
<evidence type="ECO:0000250" key="2">
    <source>
        <dbReference type="UniProtKB" id="P84138"/>
    </source>
</evidence>
<evidence type="ECO:0000250" key="3">
    <source>
        <dbReference type="UniProtKB" id="Q1EIR0"/>
    </source>
</evidence>
<evidence type="ECO:0000305" key="4"/>
<comment type="function">
    <text evidence="2">Purine nucleoside enzyme that catalyzes the phosphorolysis of adenosine and inosine nucleosides, yielding D-ribose 1-phosphate and the respective free bases, adenine and hypoxanthine. Also catalyzes the phosphorolysis of S-methyl-5'-thioadenosine into adenine and S-methyl-5-thio-alpha-D-ribose 1-phosphate. Also has adenosine deaminase activity.</text>
</comment>
<comment type="catalytic activity">
    <reaction evidence="2">
        <text>adenosine + phosphate = alpha-D-ribose 1-phosphate + adenine</text>
        <dbReference type="Rhea" id="RHEA:27642"/>
        <dbReference type="ChEBI" id="CHEBI:16335"/>
        <dbReference type="ChEBI" id="CHEBI:16708"/>
        <dbReference type="ChEBI" id="CHEBI:43474"/>
        <dbReference type="ChEBI" id="CHEBI:57720"/>
        <dbReference type="EC" id="2.4.2.1"/>
    </reaction>
    <physiologicalReaction direction="left-to-right" evidence="2">
        <dbReference type="Rhea" id="RHEA:27643"/>
    </physiologicalReaction>
</comment>
<comment type="catalytic activity">
    <reaction evidence="2">
        <text>S-methyl-5'-thioadenosine + phosphate = 5-(methylsulfanyl)-alpha-D-ribose 1-phosphate + adenine</text>
        <dbReference type="Rhea" id="RHEA:11852"/>
        <dbReference type="ChEBI" id="CHEBI:16708"/>
        <dbReference type="ChEBI" id="CHEBI:17509"/>
        <dbReference type="ChEBI" id="CHEBI:43474"/>
        <dbReference type="ChEBI" id="CHEBI:58533"/>
        <dbReference type="EC" id="2.4.2.28"/>
    </reaction>
    <physiologicalReaction direction="left-to-right" evidence="2">
        <dbReference type="Rhea" id="RHEA:11853"/>
    </physiologicalReaction>
</comment>
<comment type="catalytic activity">
    <reaction evidence="2">
        <text>inosine + phosphate = alpha-D-ribose 1-phosphate + hypoxanthine</text>
        <dbReference type="Rhea" id="RHEA:27646"/>
        <dbReference type="ChEBI" id="CHEBI:17368"/>
        <dbReference type="ChEBI" id="CHEBI:17596"/>
        <dbReference type="ChEBI" id="CHEBI:43474"/>
        <dbReference type="ChEBI" id="CHEBI:57720"/>
        <dbReference type="EC" id="2.4.2.1"/>
    </reaction>
    <physiologicalReaction direction="left-to-right" evidence="2">
        <dbReference type="Rhea" id="RHEA:27647"/>
    </physiologicalReaction>
</comment>
<comment type="catalytic activity">
    <reaction evidence="2">
        <text>adenosine + H2O + H(+) = inosine + NH4(+)</text>
        <dbReference type="Rhea" id="RHEA:24408"/>
        <dbReference type="ChEBI" id="CHEBI:15377"/>
        <dbReference type="ChEBI" id="CHEBI:15378"/>
        <dbReference type="ChEBI" id="CHEBI:16335"/>
        <dbReference type="ChEBI" id="CHEBI:17596"/>
        <dbReference type="ChEBI" id="CHEBI:28938"/>
        <dbReference type="EC" id="3.5.4.4"/>
    </reaction>
    <physiologicalReaction direction="left-to-right" evidence="2">
        <dbReference type="Rhea" id="RHEA:24409"/>
    </physiologicalReaction>
</comment>
<comment type="cofactor">
    <cofactor evidence="1">
        <name>Cu(2+)</name>
        <dbReference type="ChEBI" id="CHEBI:29036"/>
    </cofactor>
    <cofactor evidence="2">
        <name>Zn(2+)</name>
        <dbReference type="ChEBI" id="CHEBI:29105"/>
    </cofactor>
</comment>
<comment type="subunit">
    <text evidence="3">Homodimer.</text>
</comment>
<comment type="similarity">
    <text evidence="4">Belongs to the purine nucleoside phosphorylase YfiH/LACC1 family.</text>
</comment>
<proteinExistence type="inferred from homology"/>
<organism>
    <name type="scientific">Corynebacterium glutamicum (strain ATCC 13032 / DSM 20300 / JCM 1318 / BCRC 11384 / CCUG 27702 / LMG 3730 / NBRC 12168 / NCIMB 10025 / NRRL B-2784 / 534)</name>
    <dbReference type="NCBI Taxonomy" id="196627"/>
    <lineage>
        <taxon>Bacteria</taxon>
        <taxon>Bacillati</taxon>
        <taxon>Actinomycetota</taxon>
        <taxon>Actinomycetes</taxon>
        <taxon>Mycobacteriales</taxon>
        <taxon>Corynebacteriaceae</taxon>
        <taxon>Corynebacterium</taxon>
    </lineage>
</organism>
<keyword id="KW-0186">Copper</keyword>
<keyword id="KW-0378">Hydrolase</keyword>
<keyword id="KW-0479">Metal-binding</keyword>
<keyword id="KW-0560">Oxidoreductase</keyword>
<keyword id="KW-1185">Reference proteome</keyword>
<keyword id="KW-0808">Transferase</keyword>
<keyword id="KW-0862">Zinc</keyword>